<accession>O60256</accession>
<accession>B4E1M8</accession>
<accession>B4E329</accession>
<accession>B7ZKZ1</accession>
<accession>E7EMY2</accession>
<accession>Q6IAS2</accession>
<dbReference type="EMBL" id="AB007851">
    <property type="protein sequence ID" value="BAA25435.1"/>
    <property type="molecule type" value="mRNA"/>
</dbReference>
<dbReference type="EMBL" id="AK303911">
    <property type="protein sequence ID" value="BAG64840.1"/>
    <property type="molecule type" value="mRNA"/>
</dbReference>
<dbReference type="EMBL" id="AK304544">
    <property type="protein sequence ID" value="BAG65341.1"/>
    <property type="molecule type" value="mRNA"/>
</dbReference>
<dbReference type="EMBL" id="CR457082">
    <property type="protein sequence ID" value="CAG33363.1"/>
    <property type="molecule type" value="mRNA"/>
</dbReference>
<dbReference type="EMBL" id="AC090286">
    <property type="status" value="NOT_ANNOTATED_CDS"/>
    <property type="molecule type" value="Genomic_DNA"/>
</dbReference>
<dbReference type="EMBL" id="AC107982">
    <property type="status" value="NOT_ANNOTATED_CDS"/>
    <property type="molecule type" value="Genomic_DNA"/>
</dbReference>
<dbReference type="EMBL" id="BC106050">
    <property type="protein sequence ID" value="AAI06051.1"/>
    <property type="molecule type" value="mRNA"/>
</dbReference>
<dbReference type="EMBL" id="BC101670">
    <property type="protein sequence ID" value="AAI01671.1"/>
    <property type="molecule type" value="mRNA"/>
</dbReference>
<dbReference type="EMBL" id="BC101672">
    <property type="protein sequence ID" value="AAI01673.1"/>
    <property type="molecule type" value="mRNA"/>
</dbReference>
<dbReference type="EMBL" id="BC143475">
    <property type="protein sequence ID" value="AAI43476.1"/>
    <property type="molecule type" value="mRNA"/>
</dbReference>
<dbReference type="CCDS" id="CCDS11200.1">
    <molecule id="O60256-1"/>
</dbReference>
<dbReference type="CCDS" id="CCDS58525.1">
    <molecule id="O60256-3"/>
</dbReference>
<dbReference type="CCDS" id="CCDS58526.1">
    <molecule id="O60256-2"/>
</dbReference>
<dbReference type="CCDS" id="CCDS58527.1">
    <molecule id="O60256-4"/>
</dbReference>
<dbReference type="RefSeq" id="NP_001230865.1">
    <molecule id="O60256-2"/>
    <property type="nucleotide sequence ID" value="NM_001243936.2"/>
</dbReference>
<dbReference type="RefSeq" id="NP_001230869.1">
    <molecule id="O60256-3"/>
    <property type="nucleotide sequence ID" value="NM_001243940.1"/>
</dbReference>
<dbReference type="RefSeq" id="NP_001230870.1">
    <molecule id="O60256-4"/>
    <property type="nucleotide sequence ID" value="NM_001243941.1"/>
</dbReference>
<dbReference type="RefSeq" id="NP_001230871.1">
    <molecule id="O60256-4"/>
    <property type="nucleotide sequence ID" value="NM_001243942.1"/>
</dbReference>
<dbReference type="RefSeq" id="NP_001340029.1">
    <molecule id="O60256-4"/>
    <property type="nucleotide sequence ID" value="NM_001353100.2"/>
</dbReference>
<dbReference type="RefSeq" id="NP_001340030.1">
    <molecule id="O60256-1"/>
    <property type="nucleotide sequence ID" value="NM_001353101.2"/>
</dbReference>
<dbReference type="RefSeq" id="NP_001340031.1">
    <molecule id="O60256-1"/>
    <property type="nucleotide sequence ID" value="NM_001353102.2"/>
</dbReference>
<dbReference type="RefSeq" id="NP_001340032.1">
    <molecule id="O60256-4"/>
    <property type="nucleotide sequence ID" value="NM_001353103.2"/>
</dbReference>
<dbReference type="RefSeq" id="NP_001340033.1">
    <molecule id="O60256-4"/>
    <property type="nucleotide sequence ID" value="NM_001353104.2"/>
</dbReference>
<dbReference type="RefSeq" id="NP_001340034.1">
    <molecule id="O60256-1"/>
    <property type="nucleotide sequence ID" value="NM_001353105.2"/>
</dbReference>
<dbReference type="RefSeq" id="NP_001340035.1">
    <molecule id="O60256-1"/>
    <property type="nucleotide sequence ID" value="NM_001353106.2"/>
</dbReference>
<dbReference type="RefSeq" id="NP_001340036.1">
    <molecule id="O60256-1"/>
    <property type="nucleotide sequence ID" value="NM_001353107.2"/>
</dbReference>
<dbReference type="RefSeq" id="NP_002758.1">
    <molecule id="O60256-1"/>
    <property type="nucleotide sequence ID" value="NM_002767.4"/>
</dbReference>
<dbReference type="RefSeq" id="XP_005256782.1">
    <property type="nucleotide sequence ID" value="XM_005256725.2"/>
</dbReference>
<dbReference type="RefSeq" id="XP_005256783.1">
    <property type="nucleotide sequence ID" value="XM_005256726.1"/>
</dbReference>
<dbReference type="RefSeq" id="XP_005256786.1">
    <property type="nucleotide sequence ID" value="XM_005256729.4"/>
</dbReference>
<dbReference type="RefSeq" id="XP_016880354.1">
    <property type="nucleotide sequence ID" value="XM_017024865.1"/>
</dbReference>
<dbReference type="RefSeq" id="XP_016880355.1">
    <property type="nucleotide sequence ID" value="XM_017024866.1"/>
</dbReference>
<dbReference type="RefSeq" id="XP_016880356.1">
    <property type="nucleotide sequence ID" value="XM_017024867.1"/>
</dbReference>
<dbReference type="RefSeq" id="XP_016880360.1">
    <property type="nucleotide sequence ID" value="XM_017024871.1"/>
</dbReference>
<dbReference type="RefSeq" id="XP_016880361.1">
    <property type="nucleotide sequence ID" value="XM_017024872.1"/>
</dbReference>
<dbReference type="RefSeq" id="XP_016880362.1">
    <property type="nucleotide sequence ID" value="XM_017024873.1"/>
</dbReference>
<dbReference type="RefSeq" id="XP_016880363.1">
    <property type="nucleotide sequence ID" value="XM_017024874.1"/>
</dbReference>
<dbReference type="RefSeq" id="XP_016880364.1">
    <property type="nucleotide sequence ID" value="XM_017024875.1"/>
</dbReference>
<dbReference type="RefSeq" id="XP_016880365.1">
    <property type="nucleotide sequence ID" value="XM_017024876.1"/>
</dbReference>
<dbReference type="PDB" id="2JI4">
    <property type="method" value="X-ray"/>
    <property type="resolution" value="2.55 A"/>
    <property type="chains" value="A=13-369"/>
</dbReference>
<dbReference type="PDBsum" id="2JI4"/>
<dbReference type="SMR" id="O60256"/>
<dbReference type="BioGRID" id="111619">
    <property type="interactions" value="108"/>
</dbReference>
<dbReference type="FunCoup" id="O60256">
    <property type="interactions" value="636"/>
</dbReference>
<dbReference type="IntAct" id="O60256">
    <property type="interactions" value="67"/>
</dbReference>
<dbReference type="MINT" id="O60256"/>
<dbReference type="STRING" id="9606.ENSP00000268835"/>
<dbReference type="BindingDB" id="O60256"/>
<dbReference type="ChEMBL" id="CHEMBL2646"/>
<dbReference type="GlyGen" id="O60256">
    <property type="glycosylation" value="1 site, 1 O-linked glycan (1 site)"/>
</dbReference>
<dbReference type="iPTMnet" id="O60256"/>
<dbReference type="PhosphoSitePlus" id="O60256"/>
<dbReference type="SwissPalm" id="O60256"/>
<dbReference type="BioMuta" id="PRPSAP2"/>
<dbReference type="jPOST" id="O60256"/>
<dbReference type="MassIVE" id="O60256"/>
<dbReference type="PaxDb" id="9606-ENSP00000268835"/>
<dbReference type="PeptideAtlas" id="O60256"/>
<dbReference type="ProteomicsDB" id="17038"/>
<dbReference type="ProteomicsDB" id="49283">
    <molecule id="O60256-1"/>
</dbReference>
<dbReference type="ProteomicsDB" id="5873"/>
<dbReference type="ProteomicsDB" id="7202"/>
<dbReference type="Pumba" id="O60256"/>
<dbReference type="Antibodypedia" id="13570">
    <property type="antibodies" value="144 antibodies from 24 providers"/>
</dbReference>
<dbReference type="DNASU" id="5636"/>
<dbReference type="Ensembl" id="ENST00000268835.7">
    <molecule id="O60256-1"/>
    <property type="protein sequence ID" value="ENSP00000268835.2"/>
    <property type="gene ID" value="ENSG00000141127.15"/>
</dbReference>
<dbReference type="Ensembl" id="ENST00000419071.6">
    <molecule id="O60256-2"/>
    <property type="protein sequence ID" value="ENSP00000392536.2"/>
    <property type="gene ID" value="ENSG00000141127.15"/>
</dbReference>
<dbReference type="Ensembl" id="ENST00000536323.5">
    <molecule id="O60256-4"/>
    <property type="protein sequence ID" value="ENSP00000443967.1"/>
    <property type="gene ID" value="ENSG00000141127.15"/>
</dbReference>
<dbReference type="Ensembl" id="ENST00000542013.5">
    <molecule id="O60256-3"/>
    <property type="protein sequence ID" value="ENSP00000439129.1"/>
    <property type="gene ID" value="ENSG00000141127.15"/>
</dbReference>
<dbReference type="Ensembl" id="ENST00000610773.4">
    <molecule id="O60256-4"/>
    <property type="protein sequence ID" value="ENSP00000481322.1"/>
    <property type="gene ID" value="ENSG00000141127.15"/>
</dbReference>
<dbReference type="GeneID" id="5636"/>
<dbReference type="KEGG" id="hsa:5636"/>
<dbReference type="MANE-Select" id="ENST00000268835.7">
    <property type="protein sequence ID" value="ENSP00000268835.2"/>
    <property type="RefSeq nucleotide sequence ID" value="NM_002767.4"/>
    <property type="RefSeq protein sequence ID" value="NP_002758.1"/>
</dbReference>
<dbReference type="UCSC" id="uc002guo.3">
    <molecule id="O60256-1"/>
    <property type="organism name" value="human"/>
</dbReference>
<dbReference type="AGR" id="HGNC:9467"/>
<dbReference type="CTD" id="5636"/>
<dbReference type="DisGeNET" id="5636"/>
<dbReference type="GeneCards" id="PRPSAP2"/>
<dbReference type="HGNC" id="HGNC:9467">
    <property type="gene designation" value="PRPSAP2"/>
</dbReference>
<dbReference type="HPA" id="ENSG00000141127">
    <property type="expression patterns" value="Low tissue specificity"/>
</dbReference>
<dbReference type="MIM" id="603762">
    <property type="type" value="gene"/>
</dbReference>
<dbReference type="neXtProt" id="NX_O60256"/>
<dbReference type="OpenTargets" id="ENSG00000141127"/>
<dbReference type="PharmGKB" id="PA33822"/>
<dbReference type="VEuPathDB" id="HostDB:ENSG00000141127"/>
<dbReference type="eggNOG" id="KOG1503">
    <property type="taxonomic scope" value="Eukaryota"/>
</dbReference>
<dbReference type="GeneTree" id="ENSGT00950000182803"/>
<dbReference type="HOGENOM" id="CLU_033546_0_0_1"/>
<dbReference type="InParanoid" id="O60256"/>
<dbReference type="OMA" id="HYAYARS"/>
<dbReference type="OrthoDB" id="413572at2759"/>
<dbReference type="PAN-GO" id="O60256">
    <property type="GO annotations" value="5 GO annotations based on evolutionary models"/>
</dbReference>
<dbReference type="PhylomeDB" id="O60256"/>
<dbReference type="TreeFam" id="TF106367"/>
<dbReference type="PathwayCommons" id="O60256"/>
<dbReference type="SignaLink" id="O60256"/>
<dbReference type="BioGRID-ORCS" id="5636">
    <property type="hits" value="17 hits in 1159 CRISPR screens"/>
</dbReference>
<dbReference type="ChiTaRS" id="PRPSAP2">
    <property type="organism name" value="human"/>
</dbReference>
<dbReference type="EvolutionaryTrace" id="O60256"/>
<dbReference type="GeneWiki" id="PRPSAP2"/>
<dbReference type="GenomeRNAi" id="5636"/>
<dbReference type="Pharos" id="O60256">
    <property type="development level" value="Tbio"/>
</dbReference>
<dbReference type="PRO" id="PR:O60256"/>
<dbReference type="Proteomes" id="UP000005640">
    <property type="component" value="Chromosome 17"/>
</dbReference>
<dbReference type="RNAct" id="O60256">
    <property type="molecule type" value="protein"/>
</dbReference>
<dbReference type="Bgee" id="ENSG00000141127">
    <property type="expression patterns" value="Expressed in cortical plate and 204 other cell types or tissues"/>
</dbReference>
<dbReference type="ExpressionAtlas" id="O60256">
    <property type="expression patterns" value="baseline and differential"/>
</dbReference>
<dbReference type="GO" id="GO:0005737">
    <property type="term" value="C:cytoplasm"/>
    <property type="evidence" value="ECO:0000318"/>
    <property type="project" value="GO_Central"/>
</dbReference>
<dbReference type="GO" id="GO:0004857">
    <property type="term" value="F:enzyme inhibitor activity"/>
    <property type="evidence" value="ECO:0000304"/>
    <property type="project" value="ProtInc"/>
</dbReference>
<dbReference type="GO" id="GO:0030234">
    <property type="term" value="F:enzyme regulator activity"/>
    <property type="evidence" value="ECO:0000318"/>
    <property type="project" value="GO_Central"/>
</dbReference>
<dbReference type="GO" id="GO:0042802">
    <property type="term" value="F:identical protein binding"/>
    <property type="evidence" value="ECO:0000353"/>
    <property type="project" value="IntAct"/>
</dbReference>
<dbReference type="GO" id="GO:0000287">
    <property type="term" value="F:magnesium ion binding"/>
    <property type="evidence" value="ECO:0007669"/>
    <property type="project" value="InterPro"/>
</dbReference>
<dbReference type="GO" id="GO:0006015">
    <property type="term" value="P:5-phosphoribose 1-diphosphate biosynthetic process"/>
    <property type="evidence" value="ECO:0000318"/>
    <property type="project" value="GO_Central"/>
</dbReference>
<dbReference type="GO" id="GO:0060348">
    <property type="term" value="P:bone development"/>
    <property type="evidence" value="ECO:0007669"/>
    <property type="project" value="Ensembl"/>
</dbReference>
<dbReference type="GO" id="GO:0006139">
    <property type="term" value="P:nucleobase-containing compound metabolic process"/>
    <property type="evidence" value="ECO:0000304"/>
    <property type="project" value="ProtInc"/>
</dbReference>
<dbReference type="GO" id="GO:0006164">
    <property type="term" value="P:purine nucleotide biosynthetic process"/>
    <property type="evidence" value="ECO:0000318"/>
    <property type="project" value="GO_Central"/>
</dbReference>
<dbReference type="CDD" id="cd06223">
    <property type="entry name" value="PRTases_typeI"/>
    <property type="match status" value="1"/>
</dbReference>
<dbReference type="FunFam" id="3.40.50.2020:FF:000012">
    <property type="entry name" value="Phosphoribosyl pyrophosphate synthase-associated protein 2 isoform 1"/>
    <property type="match status" value="1"/>
</dbReference>
<dbReference type="FunFam" id="3.40.50.2020:FF:000014">
    <property type="entry name" value="Ribose-phosphate pyrophosphokinase 1"/>
    <property type="match status" value="1"/>
</dbReference>
<dbReference type="Gene3D" id="3.40.50.2020">
    <property type="match status" value="2"/>
</dbReference>
<dbReference type="InterPro" id="IPR029099">
    <property type="entry name" value="Pribosyltran_N"/>
</dbReference>
<dbReference type="InterPro" id="IPR000836">
    <property type="entry name" value="PRibTrfase_dom"/>
</dbReference>
<dbReference type="InterPro" id="IPR029057">
    <property type="entry name" value="PRTase-like"/>
</dbReference>
<dbReference type="InterPro" id="IPR005946">
    <property type="entry name" value="Rib-P_diPkinase"/>
</dbReference>
<dbReference type="NCBIfam" id="TIGR01251">
    <property type="entry name" value="ribP_PPkin"/>
    <property type="match status" value="1"/>
</dbReference>
<dbReference type="PANTHER" id="PTHR10210:SF29">
    <property type="entry name" value="PHOSPHORIBOSYL PYROPHOSPHATE SYNTHASE-ASSOCIATED PROTEIN 2"/>
    <property type="match status" value="1"/>
</dbReference>
<dbReference type="PANTHER" id="PTHR10210">
    <property type="entry name" value="RIBOSE-PHOSPHATE DIPHOSPHOKINASE FAMILY MEMBER"/>
    <property type="match status" value="1"/>
</dbReference>
<dbReference type="Pfam" id="PF14572">
    <property type="entry name" value="Pribosyl_synth"/>
    <property type="match status" value="1"/>
</dbReference>
<dbReference type="Pfam" id="PF13793">
    <property type="entry name" value="Pribosyltran_N"/>
    <property type="match status" value="1"/>
</dbReference>
<dbReference type="SMART" id="SM01400">
    <property type="entry name" value="Pribosyltran_N"/>
    <property type="match status" value="1"/>
</dbReference>
<dbReference type="SUPFAM" id="SSF53271">
    <property type="entry name" value="PRTase-like"/>
    <property type="match status" value="2"/>
</dbReference>
<comment type="function">
    <text>Seems to play a negative regulatory role in 5-phosphoribose 1-diphosphate synthesis.</text>
</comment>
<comment type="subunit">
    <text>Binds to PRPS1 and PRPS2.</text>
</comment>
<comment type="interaction">
    <interactant intactId="EBI-724960">
        <id>O60256</id>
    </interactant>
    <interactant intactId="EBI-749195">
        <id>P60891</id>
        <label>PRPS1</label>
    </interactant>
    <organismsDiffer>false</organismsDiffer>
    <experiments>10</experiments>
</comment>
<comment type="interaction">
    <interactant intactId="EBI-724960">
        <id>O60256</id>
    </interactant>
    <interactant intactId="EBI-12063547">
        <id>P11908-2</id>
        <label>PRPS2</label>
    </interactant>
    <organismsDiffer>false</organismsDiffer>
    <experiments>4</experiments>
</comment>
<comment type="interaction">
    <interactant intactId="EBI-724960">
        <id>O60256</id>
    </interactant>
    <interactant intactId="EBI-724449">
        <id>Q14558</id>
        <label>PRPSAP1</label>
    </interactant>
    <organismsDiffer>false</organismsDiffer>
    <experiments>8</experiments>
</comment>
<comment type="interaction">
    <interactant intactId="EBI-724960">
        <id>O60256</id>
    </interactant>
    <interactant intactId="EBI-724960">
        <id>O60256</id>
        <label>PRPSAP2</label>
    </interactant>
    <organismsDiffer>false</organismsDiffer>
    <experiments>3</experiments>
</comment>
<comment type="interaction">
    <interactant intactId="EBI-724960">
        <id>O60256</id>
    </interactant>
    <interactant intactId="EBI-11523345">
        <id>Q8IYF3-3</id>
        <label>TEX11</label>
    </interactant>
    <organismsDiffer>false</organismsDiffer>
    <experiments>3</experiments>
</comment>
<comment type="alternative products">
    <event type="alternative splicing"/>
    <isoform>
        <id>O60256-1</id>
        <name>1</name>
        <sequence type="displayed"/>
    </isoform>
    <isoform>
        <id>O60256-2</id>
        <name>2</name>
        <sequence type="described" ref="VSP_044731"/>
    </isoform>
    <isoform>
        <id>O60256-3</id>
        <name>3</name>
        <sequence type="described" ref="VSP_046462"/>
    </isoform>
    <isoform>
        <id>O60256-4</id>
        <name>4</name>
        <sequence type="described" ref="VSP_054765"/>
    </isoform>
</comment>
<comment type="tissue specificity">
    <text>Ubiquitous.</text>
</comment>
<comment type="similarity">
    <text evidence="4">Belongs to the ribose-phosphate pyrophosphokinase family.</text>
</comment>
<name>KPRB_HUMAN</name>
<reference key="1">
    <citation type="journal article" date="1998" name="Biochim. Biophys. Acta">
        <title>Molecular cloning of a human cDNA for the 41-kDa phosphoribosylpyrophosphate synthetase-associated protein.</title>
        <authorList>
            <person name="Katashima R."/>
            <person name="Iwahana H."/>
            <person name="Fujimura M."/>
            <person name="Yamaoka T."/>
            <person name="Ishizuka T."/>
            <person name="Tatibana M."/>
            <person name="Itakura M."/>
        </authorList>
    </citation>
    <scope>NUCLEOTIDE SEQUENCE [MRNA] (ISOFORM 1)</scope>
</reference>
<reference key="2">
    <citation type="journal article" date="2004" name="Nat. Genet.">
        <title>Complete sequencing and characterization of 21,243 full-length human cDNAs.</title>
        <authorList>
            <person name="Ota T."/>
            <person name="Suzuki Y."/>
            <person name="Nishikawa T."/>
            <person name="Otsuki T."/>
            <person name="Sugiyama T."/>
            <person name="Irie R."/>
            <person name="Wakamatsu A."/>
            <person name="Hayashi K."/>
            <person name="Sato H."/>
            <person name="Nagai K."/>
            <person name="Kimura K."/>
            <person name="Makita H."/>
            <person name="Sekine M."/>
            <person name="Obayashi M."/>
            <person name="Nishi T."/>
            <person name="Shibahara T."/>
            <person name="Tanaka T."/>
            <person name="Ishii S."/>
            <person name="Yamamoto J."/>
            <person name="Saito K."/>
            <person name="Kawai Y."/>
            <person name="Isono Y."/>
            <person name="Nakamura Y."/>
            <person name="Nagahari K."/>
            <person name="Murakami K."/>
            <person name="Yasuda T."/>
            <person name="Iwayanagi T."/>
            <person name="Wagatsuma M."/>
            <person name="Shiratori A."/>
            <person name="Sudo H."/>
            <person name="Hosoiri T."/>
            <person name="Kaku Y."/>
            <person name="Kodaira H."/>
            <person name="Kondo H."/>
            <person name="Sugawara M."/>
            <person name="Takahashi M."/>
            <person name="Kanda K."/>
            <person name="Yokoi T."/>
            <person name="Furuya T."/>
            <person name="Kikkawa E."/>
            <person name="Omura Y."/>
            <person name="Abe K."/>
            <person name="Kamihara K."/>
            <person name="Katsuta N."/>
            <person name="Sato K."/>
            <person name="Tanikawa M."/>
            <person name="Yamazaki M."/>
            <person name="Ninomiya K."/>
            <person name="Ishibashi T."/>
            <person name="Yamashita H."/>
            <person name="Murakawa K."/>
            <person name="Fujimori K."/>
            <person name="Tanai H."/>
            <person name="Kimata M."/>
            <person name="Watanabe M."/>
            <person name="Hiraoka S."/>
            <person name="Chiba Y."/>
            <person name="Ishida S."/>
            <person name="Ono Y."/>
            <person name="Takiguchi S."/>
            <person name="Watanabe S."/>
            <person name="Yosida M."/>
            <person name="Hotuta T."/>
            <person name="Kusano J."/>
            <person name="Kanehori K."/>
            <person name="Takahashi-Fujii A."/>
            <person name="Hara H."/>
            <person name="Tanase T.-O."/>
            <person name="Nomura Y."/>
            <person name="Togiya S."/>
            <person name="Komai F."/>
            <person name="Hara R."/>
            <person name="Takeuchi K."/>
            <person name="Arita M."/>
            <person name="Imose N."/>
            <person name="Musashino K."/>
            <person name="Yuuki H."/>
            <person name="Oshima A."/>
            <person name="Sasaki N."/>
            <person name="Aotsuka S."/>
            <person name="Yoshikawa Y."/>
            <person name="Matsunawa H."/>
            <person name="Ichihara T."/>
            <person name="Shiohata N."/>
            <person name="Sano S."/>
            <person name="Moriya S."/>
            <person name="Momiyama H."/>
            <person name="Satoh N."/>
            <person name="Takami S."/>
            <person name="Terashima Y."/>
            <person name="Suzuki O."/>
            <person name="Nakagawa S."/>
            <person name="Senoh A."/>
            <person name="Mizoguchi H."/>
            <person name="Goto Y."/>
            <person name="Shimizu F."/>
            <person name="Wakebe H."/>
            <person name="Hishigaki H."/>
            <person name="Watanabe T."/>
            <person name="Sugiyama A."/>
            <person name="Takemoto M."/>
            <person name="Kawakami B."/>
            <person name="Yamazaki M."/>
            <person name="Watanabe K."/>
            <person name="Kumagai A."/>
            <person name="Itakura S."/>
            <person name="Fukuzumi Y."/>
            <person name="Fujimori Y."/>
            <person name="Komiyama M."/>
            <person name="Tashiro H."/>
            <person name="Tanigami A."/>
            <person name="Fujiwara T."/>
            <person name="Ono T."/>
            <person name="Yamada K."/>
            <person name="Fujii Y."/>
            <person name="Ozaki K."/>
            <person name="Hirao M."/>
            <person name="Ohmori Y."/>
            <person name="Kawabata A."/>
            <person name="Hikiji T."/>
            <person name="Kobatake N."/>
            <person name="Inagaki H."/>
            <person name="Ikema Y."/>
            <person name="Okamoto S."/>
            <person name="Okitani R."/>
            <person name="Kawakami T."/>
            <person name="Noguchi S."/>
            <person name="Itoh T."/>
            <person name="Shigeta K."/>
            <person name="Senba T."/>
            <person name="Matsumura K."/>
            <person name="Nakajima Y."/>
            <person name="Mizuno T."/>
            <person name="Morinaga M."/>
            <person name="Sasaki M."/>
            <person name="Togashi T."/>
            <person name="Oyama M."/>
            <person name="Hata H."/>
            <person name="Watanabe M."/>
            <person name="Komatsu T."/>
            <person name="Mizushima-Sugano J."/>
            <person name="Satoh T."/>
            <person name="Shirai Y."/>
            <person name="Takahashi Y."/>
            <person name="Nakagawa K."/>
            <person name="Okumura K."/>
            <person name="Nagase T."/>
            <person name="Nomura N."/>
            <person name="Kikuchi H."/>
            <person name="Masuho Y."/>
            <person name="Yamashita R."/>
            <person name="Nakai K."/>
            <person name="Yada T."/>
            <person name="Nakamura Y."/>
            <person name="Ohara O."/>
            <person name="Isogai T."/>
            <person name="Sugano S."/>
        </authorList>
    </citation>
    <scope>NUCLEOTIDE SEQUENCE [LARGE SCALE MRNA] (ISOFORMS 2 AND 4)</scope>
    <source>
        <tissue>Trachea</tissue>
    </source>
</reference>
<reference key="3">
    <citation type="submission" date="2004-06" db="EMBL/GenBank/DDBJ databases">
        <title>Cloning of human full open reading frames in Gateway(TM) system entry vector (pDONR201).</title>
        <authorList>
            <person name="Ebert L."/>
            <person name="Schick M."/>
            <person name="Neubert P."/>
            <person name="Schatten R."/>
            <person name="Henze S."/>
            <person name="Korn B."/>
        </authorList>
    </citation>
    <scope>NUCLEOTIDE SEQUENCE [LARGE SCALE MRNA] (ISOFORM 1)</scope>
</reference>
<reference key="4">
    <citation type="journal article" date="2006" name="Nature">
        <title>DNA sequence of human chromosome 17 and analysis of rearrangement in the human lineage.</title>
        <authorList>
            <person name="Zody M.C."/>
            <person name="Garber M."/>
            <person name="Adams D.J."/>
            <person name="Sharpe T."/>
            <person name="Harrow J."/>
            <person name="Lupski J.R."/>
            <person name="Nicholson C."/>
            <person name="Searle S.M."/>
            <person name="Wilming L."/>
            <person name="Young S.K."/>
            <person name="Abouelleil A."/>
            <person name="Allen N.R."/>
            <person name="Bi W."/>
            <person name="Bloom T."/>
            <person name="Borowsky M.L."/>
            <person name="Bugalter B.E."/>
            <person name="Butler J."/>
            <person name="Chang J.L."/>
            <person name="Chen C.-K."/>
            <person name="Cook A."/>
            <person name="Corum B."/>
            <person name="Cuomo C.A."/>
            <person name="de Jong P.J."/>
            <person name="DeCaprio D."/>
            <person name="Dewar K."/>
            <person name="FitzGerald M."/>
            <person name="Gilbert J."/>
            <person name="Gibson R."/>
            <person name="Gnerre S."/>
            <person name="Goldstein S."/>
            <person name="Grafham D.V."/>
            <person name="Grocock R."/>
            <person name="Hafez N."/>
            <person name="Hagopian D.S."/>
            <person name="Hart E."/>
            <person name="Norman C.H."/>
            <person name="Humphray S."/>
            <person name="Jaffe D.B."/>
            <person name="Jones M."/>
            <person name="Kamal M."/>
            <person name="Khodiyar V.K."/>
            <person name="LaButti K."/>
            <person name="Laird G."/>
            <person name="Lehoczky J."/>
            <person name="Liu X."/>
            <person name="Lokyitsang T."/>
            <person name="Loveland J."/>
            <person name="Lui A."/>
            <person name="Macdonald P."/>
            <person name="Major J.E."/>
            <person name="Matthews L."/>
            <person name="Mauceli E."/>
            <person name="McCarroll S.A."/>
            <person name="Mihalev A.H."/>
            <person name="Mudge J."/>
            <person name="Nguyen C."/>
            <person name="Nicol R."/>
            <person name="O'Leary S.B."/>
            <person name="Osoegawa K."/>
            <person name="Schwartz D.C."/>
            <person name="Shaw-Smith C."/>
            <person name="Stankiewicz P."/>
            <person name="Steward C."/>
            <person name="Swarbreck D."/>
            <person name="Venkataraman V."/>
            <person name="Whittaker C.A."/>
            <person name="Yang X."/>
            <person name="Zimmer A.R."/>
            <person name="Bradley A."/>
            <person name="Hubbard T."/>
            <person name="Birren B.W."/>
            <person name="Rogers J."/>
            <person name="Lander E.S."/>
            <person name="Nusbaum C."/>
        </authorList>
    </citation>
    <scope>NUCLEOTIDE SEQUENCE [LARGE SCALE GENOMIC DNA]</scope>
</reference>
<reference key="5">
    <citation type="journal article" date="2004" name="Genome Res.">
        <title>The status, quality, and expansion of the NIH full-length cDNA project: the Mammalian Gene Collection (MGC).</title>
        <authorList>
            <consortium name="The MGC Project Team"/>
        </authorList>
    </citation>
    <scope>NUCLEOTIDE SEQUENCE [LARGE SCALE MRNA] (ISOFORMS 1 AND 3)</scope>
    <source>
        <tissue>Brain</tissue>
        <tissue>Uterus</tissue>
    </source>
</reference>
<reference key="6">
    <citation type="submission" date="2009-03" db="UniProtKB">
        <authorList>
            <person name="Bienvenut W.V."/>
            <person name="Waridel P."/>
            <person name="Quadroni M."/>
        </authorList>
    </citation>
    <scope>PROTEIN SEQUENCE OF 18-36; 49-57; 61-97; 103-115; 137-181; 205-232; 250-288; 293-330; 338-350 AND 352-363</scope>
    <scope>PHOSPHORYLATION AT SER-227</scope>
    <scope>IDENTIFICATION BY MASS SPECTROMETRY</scope>
    <source>
        <tissue>Embryonic kidney</tissue>
    </source>
</reference>
<reference key="7">
    <citation type="journal article" date="2006" name="Cell">
        <title>Global, in vivo, and site-specific phosphorylation dynamics in signaling networks.</title>
        <authorList>
            <person name="Olsen J.V."/>
            <person name="Blagoev B."/>
            <person name="Gnad F."/>
            <person name="Macek B."/>
            <person name="Kumar C."/>
            <person name="Mortensen P."/>
            <person name="Mann M."/>
        </authorList>
    </citation>
    <scope>PHOSPHORYLATION [LARGE SCALE ANALYSIS] AT SER-227</scope>
    <scope>IDENTIFICATION BY MASS SPECTROMETRY [LARGE SCALE ANALYSIS]</scope>
    <source>
        <tissue>Cervix carcinoma</tissue>
    </source>
</reference>
<reference key="8">
    <citation type="journal article" date="2008" name="Proc. Natl. Acad. Sci. U.S.A.">
        <title>A quantitative atlas of mitotic phosphorylation.</title>
        <authorList>
            <person name="Dephoure N."/>
            <person name="Zhou C."/>
            <person name="Villen J."/>
            <person name="Beausoleil S.A."/>
            <person name="Bakalarski C.E."/>
            <person name="Elledge S.J."/>
            <person name="Gygi S.P."/>
        </authorList>
    </citation>
    <scope>PHOSPHORYLATION [LARGE SCALE ANALYSIS] AT SER-227</scope>
    <scope>IDENTIFICATION BY MASS SPECTROMETRY [LARGE SCALE ANALYSIS]</scope>
    <source>
        <tissue>Cervix carcinoma</tissue>
    </source>
</reference>
<reference key="9">
    <citation type="journal article" date="2009" name="Anal. Chem.">
        <title>Lys-N and trypsin cover complementary parts of the phosphoproteome in a refined SCX-based approach.</title>
        <authorList>
            <person name="Gauci S."/>
            <person name="Helbig A.O."/>
            <person name="Slijper M."/>
            <person name="Krijgsveld J."/>
            <person name="Heck A.J."/>
            <person name="Mohammed S."/>
        </authorList>
    </citation>
    <scope>ACETYLATION [LARGE SCALE ANALYSIS] AT MET-1</scope>
    <scope>IDENTIFICATION BY MASS SPECTROMETRY [LARGE SCALE ANALYSIS]</scope>
</reference>
<reference key="10">
    <citation type="journal article" date="2009" name="Sci. Signal.">
        <title>Quantitative phosphoproteomic analysis of T cell receptor signaling reveals system-wide modulation of protein-protein interactions.</title>
        <authorList>
            <person name="Mayya V."/>
            <person name="Lundgren D.H."/>
            <person name="Hwang S.-I."/>
            <person name="Rezaul K."/>
            <person name="Wu L."/>
            <person name="Eng J.K."/>
            <person name="Rodionov V."/>
            <person name="Han D.K."/>
        </authorList>
    </citation>
    <scope>PHOSPHORYLATION [LARGE SCALE ANALYSIS] AT SER-227</scope>
    <scope>IDENTIFICATION BY MASS SPECTROMETRY [LARGE SCALE ANALYSIS]</scope>
    <source>
        <tissue>Leukemic T-cell</tissue>
    </source>
</reference>
<reference key="11">
    <citation type="journal article" date="2010" name="Sci. Signal.">
        <title>Quantitative phosphoproteomics reveals widespread full phosphorylation site occupancy during mitosis.</title>
        <authorList>
            <person name="Olsen J.V."/>
            <person name="Vermeulen M."/>
            <person name="Santamaria A."/>
            <person name="Kumar C."/>
            <person name="Miller M.L."/>
            <person name="Jensen L.J."/>
            <person name="Gnad F."/>
            <person name="Cox J."/>
            <person name="Jensen T.S."/>
            <person name="Nigg E.A."/>
            <person name="Brunak S."/>
            <person name="Mann M."/>
        </authorList>
    </citation>
    <scope>PHOSPHORYLATION [LARGE SCALE ANALYSIS] AT SER-227</scope>
    <scope>IDENTIFICATION BY MASS SPECTROMETRY [LARGE SCALE ANALYSIS]</scope>
    <source>
        <tissue>Cervix carcinoma</tissue>
    </source>
</reference>
<reference key="12">
    <citation type="journal article" date="2011" name="BMC Syst. Biol.">
        <title>Initial characterization of the human central proteome.</title>
        <authorList>
            <person name="Burkard T.R."/>
            <person name="Planyavsky M."/>
            <person name="Kaupe I."/>
            <person name="Breitwieser F.P."/>
            <person name="Buerckstuemmer T."/>
            <person name="Bennett K.L."/>
            <person name="Superti-Furga G."/>
            <person name="Colinge J."/>
        </authorList>
    </citation>
    <scope>IDENTIFICATION BY MASS SPECTROMETRY [LARGE SCALE ANALYSIS]</scope>
</reference>
<reference key="13">
    <citation type="journal article" date="2011" name="Sci. Signal.">
        <title>System-wide temporal characterization of the proteome and phosphoproteome of human embryonic stem cell differentiation.</title>
        <authorList>
            <person name="Rigbolt K.T."/>
            <person name="Prokhorova T.A."/>
            <person name="Akimov V."/>
            <person name="Henningsen J."/>
            <person name="Johansen P.T."/>
            <person name="Kratchmarova I."/>
            <person name="Kassem M."/>
            <person name="Mann M."/>
            <person name="Olsen J.V."/>
            <person name="Blagoev B."/>
        </authorList>
    </citation>
    <scope>PHOSPHORYLATION [LARGE SCALE ANALYSIS] AT SER-227</scope>
    <scope>IDENTIFICATION BY MASS SPECTROMETRY [LARGE SCALE ANALYSIS]</scope>
</reference>
<reference key="14">
    <citation type="journal article" date="2013" name="J. Proteome Res.">
        <title>Toward a comprehensive characterization of a human cancer cell phosphoproteome.</title>
        <authorList>
            <person name="Zhou H."/>
            <person name="Di Palma S."/>
            <person name="Preisinger C."/>
            <person name="Peng M."/>
            <person name="Polat A.N."/>
            <person name="Heck A.J."/>
            <person name="Mohammed S."/>
        </authorList>
    </citation>
    <scope>PHOSPHORYLATION [LARGE SCALE ANALYSIS] AT THR-5</scope>
    <scope>IDENTIFICATION BY MASS SPECTROMETRY [LARGE SCALE ANALYSIS]</scope>
    <source>
        <tissue>Cervix carcinoma</tissue>
        <tissue>Erythroleukemia</tissue>
    </source>
</reference>
<reference key="15">
    <citation type="journal article" date="2014" name="J. Proteomics">
        <title>An enzyme assisted RP-RPLC approach for in-depth analysis of human liver phosphoproteome.</title>
        <authorList>
            <person name="Bian Y."/>
            <person name="Song C."/>
            <person name="Cheng K."/>
            <person name="Dong M."/>
            <person name="Wang F."/>
            <person name="Huang J."/>
            <person name="Sun D."/>
            <person name="Wang L."/>
            <person name="Ye M."/>
            <person name="Zou H."/>
        </authorList>
    </citation>
    <scope>PHOSPHORYLATION [LARGE SCALE ANALYSIS] AT SER-219; SER-227 AND SER-233</scope>
    <scope>IDENTIFICATION BY MASS SPECTROMETRY [LARGE SCALE ANALYSIS]</scope>
    <source>
        <tissue>Liver</tissue>
    </source>
</reference>
<reference key="16">
    <citation type="submission" date="2009-02" db="PDB data bank">
        <title>Human phosphoribosylpyrophosphate synthetase-associated protein 41 (Pap41).</title>
        <authorList>
            <consortium name="Structural genomics consortium (SGC)"/>
        </authorList>
    </citation>
    <scope>X-RAY CRYSTALLOGRAPHY (2.55 ANGSTROMS) OF 13-369</scope>
</reference>
<evidence type="ECO:0000269" key="1">
    <source ref="6"/>
</evidence>
<evidence type="ECO:0000303" key="2">
    <source>
    </source>
</evidence>
<evidence type="ECO:0000303" key="3">
    <source>
    </source>
</evidence>
<evidence type="ECO:0000305" key="4"/>
<evidence type="ECO:0007744" key="5">
    <source>
    </source>
</evidence>
<evidence type="ECO:0007744" key="6">
    <source>
    </source>
</evidence>
<evidence type="ECO:0007744" key="7">
    <source>
    </source>
</evidence>
<evidence type="ECO:0007744" key="8">
    <source>
    </source>
</evidence>
<evidence type="ECO:0007744" key="9">
    <source>
    </source>
</evidence>
<evidence type="ECO:0007744" key="10">
    <source>
    </source>
</evidence>
<evidence type="ECO:0007744" key="11">
    <source>
    </source>
</evidence>
<evidence type="ECO:0007744" key="12">
    <source>
    </source>
</evidence>
<evidence type="ECO:0007829" key="13">
    <source>
        <dbReference type="PDB" id="2JI4"/>
    </source>
</evidence>
<organism>
    <name type="scientific">Homo sapiens</name>
    <name type="common">Human</name>
    <dbReference type="NCBI Taxonomy" id="9606"/>
    <lineage>
        <taxon>Eukaryota</taxon>
        <taxon>Metazoa</taxon>
        <taxon>Chordata</taxon>
        <taxon>Craniata</taxon>
        <taxon>Vertebrata</taxon>
        <taxon>Euteleostomi</taxon>
        <taxon>Mammalia</taxon>
        <taxon>Eutheria</taxon>
        <taxon>Euarchontoglires</taxon>
        <taxon>Primates</taxon>
        <taxon>Haplorrhini</taxon>
        <taxon>Catarrhini</taxon>
        <taxon>Hominidae</taxon>
        <taxon>Homo</taxon>
    </lineage>
</organism>
<keyword id="KW-0002">3D-structure</keyword>
<keyword id="KW-0007">Acetylation</keyword>
<keyword id="KW-0025">Alternative splicing</keyword>
<keyword id="KW-0903">Direct protein sequencing</keyword>
<keyword id="KW-0545">Nucleotide biosynthesis</keyword>
<keyword id="KW-0597">Phosphoprotein</keyword>
<keyword id="KW-1267">Proteomics identification</keyword>
<keyword id="KW-1185">Reference proteome</keyword>
<protein>
    <recommendedName>
        <fullName>Phosphoribosyl pyrophosphate synthase-associated protein 2</fullName>
        <shortName>PRPP synthase-associated protein 2</shortName>
    </recommendedName>
    <alternativeName>
        <fullName>41 kDa phosphoribosypyrophosphate synthetase-associated protein</fullName>
        <shortName>PAP41</shortName>
    </alternativeName>
</protein>
<sequence length="369" mass="40926">MFCVTPPELETKMNITKGGLVLFSANSNSSCMELSKKIAERLGVEMGKVQVYQEPNRETRVQIQESVRGKDVFIIQTVSKDVNTTIMELLIMVYACKTSCAKSIIGVIPYFPYSKQCKMRKRGSIVSKLLASMMCKAGLTHLITMDLHQKEIQGFFNIPVDNLRASPFLLQYIQEEIPDYRNAVIVAKSPASAKRAQSFAERLRLGIAVIHGEAQDAESDLVDGRHSPPMVRSVAAIHPSLEIPMLIPKEKPPITVVGDVGGRIAIIVDDIIDDVDSFLAAAETLKERGAYKIFVMATHGLLSSDAPRRIEESAIDEVVVTNTIPHEVQKLQCPKIKTVDISMILSEAIRRIHNGESMSYLFRNIGLDD</sequence>
<proteinExistence type="evidence at protein level"/>
<gene>
    <name type="primary">PRPSAP2</name>
</gene>
<feature type="chain" id="PRO_0000141082" description="Phosphoribosyl pyrophosphate synthase-associated protein 2">
    <location>
        <begin position="1"/>
        <end position="369"/>
    </location>
</feature>
<feature type="modified residue" description="N-acetylmethionine" evidence="7">
    <location>
        <position position="1"/>
    </location>
</feature>
<feature type="modified residue" description="Phosphothreonine" evidence="11">
    <location>
        <position position="5"/>
    </location>
</feature>
<feature type="modified residue" description="Phosphoserine" evidence="12">
    <location>
        <position position="219"/>
    </location>
</feature>
<feature type="modified residue" description="Phosphoserine" evidence="1 5 6 8 9 10 12">
    <location>
        <position position="227"/>
    </location>
</feature>
<feature type="modified residue" description="Phosphoserine" evidence="12">
    <location>
        <position position="233"/>
    </location>
</feature>
<feature type="splice variant" id="VSP_054765" description="In isoform 4." evidence="2">
    <location>
        <begin position="1"/>
        <end position="86"/>
    </location>
</feature>
<feature type="splice variant" id="VSP_044731" description="In isoform 2." evidence="2">
    <location>
        <begin position="41"/>
        <end position="80"/>
    </location>
</feature>
<feature type="splice variant" id="VSP_046462" description="In isoform 3." evidence="3">
    <location>
        <begin position="269"/>
        <end position="317"/>
    </location>
</feature>
<feature type="sequence conflict" description="In Ref. 2; BAG64840." evidence="4" ref="2">
    <original>K</original>
    <variation>R</variation>
    <location>
        <position position="121"/>
    </location>
</feature>
<feature type="strand" evidence="13">
    <location>
        <begin position="21"/>
        <end position="24"/>
    </location>
</feature>
<feature type="helix" evidence="13">
    <location>
        <begin position="29"/>
        <end position="32"/>
    </location>
</feature>
<feature type="helix" evidence="13">
    <location>
        <begin position="33"/>
        <end position="42"/>
    </location>
</feature>
<feature type="strand" evidence="13">
    <location>
        <begin position="49"/>
        <end position="53"/>
    </location>
</feature>
<feature type="strand" evidence="13">
    <location>
        <begin position="59"/>
        <end position="63"/>
    </location>
</feature>
<feature type="strand" evidence="13">
    <location>
        <begin position="71"/>
        <end position="75"/>
    </location>
</feature>
<feature type="helix" evidence="13">
    <location>
        <begin position="82"/>
        <end position="98"/>
    </location>
</feature>
<feature type="strand" evidence="13">
    <location>
        <begin position="102"/>
        <end position="107"/>
    </location>
</feature>
<feature type="helix" evidence="13">
    <location>
        <begin position="126"/>
        <end position="136"/>
    </location>
</feature>
<feature type="strand" evidence="13">
    <location>
        <begin position="141"/>
        <end position="146"/>
    </location>
</feature>
<feature type="helix" evidence="13">
    <location>
        <begin position="150"/>
        <end position="155"/>
    </location>
</feature>
<feature type="strand" evidence="13">
    <location>
        <begin position="156"/>
        <end position="158"/>
    </location>
</feature>
<feature type="strand" evidence="13">
    <location>
        <begin position="160"/>
        <end position="163"/>
    </location>
</feature>
<feature type="helix" evidence="13">
    <location>
        <begin position="166"/>
        <end position="176"/>
    </location>
</feature>
<feature type="helix" evidence="13">
    <location>
        <begin position="180"/>
        <end position="182"/>
    </location>
</feature>
<feature type="strand" evidence="13">
    <location>
        <begin position="183"/>
        <end position="189"/>
    </location>
</feature>
<feature type="helix" evidence="13">
    <location>
        <begin position="190"/>
        <end position="192"/>
    </location>
</feature>
<feature type="helix" evidence="13">
    <location>
        <begin position="193"/>
        <end position="202"/>
    </location>
</feature>
<feature type="strand" evidence="13">
    <location>
        <begin position="206"/>
        <end position="210"/>
    </location>
</feature>
<feature type="strand" evidence="13">
    <location>
        <begin position="256"/>
        <end position="258"/>
    </location>
</feature>
<feature type="strand" evidence="13">
    <location>
        <begin position="263"/>
        <end position="272"/>
    </location>
</feature>
<feature type="helix" evidence="13">
    <location>
        <begin position="276"/>
        <end position="287"/>
    </location>
</feature>
<feature type="strand" evidence="13">
    <location>
        <begin position="292"/>
        <end position="300"/>
    </location>
</feature>
<feature type="helix" evidence="13">
    <location>
        <begin position="306"/>
        <end position="312"/>
    </location>
</feature>
<feature type="strand" evidence="13">
    <location>
        <begin position="317"/>
        <end position="324"/>
    </location>
</feature>
<feature type="helix" evidence="13">
    <location>
        <begin position="327"/>
        <end position="331"/>
    </location>
</feature>
<feature type="strand" evidence="13">
    <location>
        <begin position="336"/>
        <end position="339"/>
    </location>
</feature>
<feature type="helix" evidence="13">
    <location>
        <begin position="342"/>
        <end position="354"/>
    </location>
</feature>
<feature type="strand" evidence="13">
    <location>
        <begin position="362"/>
        <end position="364"/>
    </location>
</feature>